<accession>B9JWZ2</accession>
<organism>
    <name type="scientific">Allorhizobium ampelinum (strain ATCC BAA-846 / DSM 112012 / S4)</name>
    <name type="common">Agrobacterium vitis (strain S4)</name>
    <dbReference type="NCBI Taxonomy" id="311402"/>
    <lineage>
        <taxon>Bacteria</taxon>
        <taxon>Pseudomonadati</taxon>
        <taxon>Pseudomonadota</taxon>
        <taxon>Alphaproteobacteria</taxon>
        <taxon>Hyphomicrobiales</taxon>
        <taxon>Rhizobiaceae</taxon>
        <taxon>Rhizobium/Agrobacterium group</taxon>
        <taxon>Allorhizobium</taxon>
        <taxon>Allorhizobium ampelinum</taxon>
    </lineage>
</organism>
<reference key="1">
    <citation type="journal article" date="2009" name="J. Bacteriol.">
        <title>Genome sequences of three Agrobacterium biovars help elucidate the evolution of multichromosome genomes in bacteria.</title>
        <authorList>
            <person name="Slater S.C."/>
            <person name="Goldman B.S."/>
            <person name="Goodner B."/>
            <person name="Setubal J.C."/>
            <person name="Farrand S.K."/>
            <person name="Nester E.W."/>
            <person name="Burr T.J."/>
            <person name="Banta L."/>
            <person name="Dickerman A.W."/>
            <person name="Paulsen I."/>
            <person name="Otten L."/>
            <person name="Suen G."/>
            <person name="Welch R."/>
            <person name="Almeida N.F."/>
            <person name="Arnold F."/>
            <person name="Burton O.T."/>
            <person name="Du Z."/>
            <person name="Ewing A."/>
            <person name="Godsy E."/>
            <person name="Heisel S."/>
            <person name="Houmiel K.L."/>
            <person name="Jhaveri J."/>
            <person name="Lu J."/>
            <person name="Miller N.M."/>
            <person name="Norton S."/>
            <person name="Chen Q."/>
            <person name="Phoolcharoen W."/>
            <person name="Ohlin V."/>
            <person name="Ondrusek D."/>
            <person name="Pride N."/>
            <person name="Stricklin S.L."/>
            <person name="Sun J."/>
            <person name="Wheeler C."/>
            <person name="Wilson L."/>
            <person name="Zhu H."/>
            <person name="Wood D.W."/>
        </authorList>
    </citation>
    <scope>NUCLEOTIDE SEQUENCE [LARGE SCALE GENOMIC DNA]</scope>
    <source>
        <strain>ATCC BAA-846 / DSM 112012 / S4</strain>
    </source>
</reference>
<feature type="chain" id="PRO_1000198136" description="Trigger factor">
    <location>
        <begin position="1"/>
        <end position="493"/>
    </location>
</feature>
<feature type="domain" description="PPIase FKBP-type" evidence="1">
    <location>
        <begin position="169"/>
        <end position="254"/>
    </location>
</feature>
<feature type="region of interest" description="Disordered" evidence="2">
    <location>
        <begin position="439"/>
        <end position="493"/>
    </location>
</feature>
<keyword id="KW-0131">Cell cycle</keyword>
<keyword id="KW-0132">Cell division</keyword>
<keyword id="KW-0143">Chaperone</keyword>
<keyword id="KW-0963">Cytoplasm</keyword>
<keyword id="KW-0413">Isomerase</keyword>
<keyword id="KW-1185">Reference proteome</keyword>
<keyword id="KW-0697">Rotamase</keyword>
<gene>
    <name evidence="1" type="primary">tig</name>
    <name type="ordered locus">Avi_2478</name>
</gene>
<evidence type="ECO:0000255" key="1">
    <source>
        <dbReference type="HAMAP-Rule" id="MF_00303"/>
    </source>
</evidence>
<evidence type="ECO:0000256" key="2">
    <source>
        <dbReference type="SAM" id="MobiDB-lite"/>
    </source>
</evidence>
<name>TIG_ALLAM</name>
<comment type="function">
    <text evidence="1">Involved in protein export. Acts as a chaperone by maintaining the newly synthesized protein in an open conformation. Functions as a peptidyl-prolyl cis-trans isomerase.</text>
</comment>
<comment type="catalytic activity">
    <reaction evidence="1">
        <text>[protein]-peptidylproline (omega=180) = [protein]-peptidylproline (omega=0)</text>
        <dbReference type="Rhea" id="RHEA:16237"/>
        <dbReference type="Rhea" id="RHEA-COMP:10747"/>
        <dbReference type="Rhea" id="RHEA-COMP:10748"/>
        <dbReference type="ChEBI" id="CHEBI:83833"/>
        <dbReference type="ChEBI" id="CHEBI:83834"/>
        <dbReference type="EC" id="5.2.1.8"/>
    </reaction>
</comment>
<comment type="subcellular location">
    <subcellularLocation>
        <location>Cytoplasm</location>
    </subcellularLocation>
    <text evidence="1">About half TF is bound to the ribosome near the polypeptide exit tunnel while the other half is free in the cytoplasm.</text>
</comment>
<comment type="domain">
    <text evidence="1">Consists of 3 domains; the N-terminus binds the ribosome, the middle domain has PPIase activity, while the C-terminus has intrinsic chaperone activity on its own.</text>
</comment>
<comment type="similarity">
    <text evidence="1">Belongs to the FKBP-type PPIase family. Tig subfamily.</text>
</comment>
<dbReference type="EC" id="5.2.1.8" evidence="1"/>
<dbReference type="EMBL" id="CP000633">
    <property type="protein sequence ID" value="ACM36770.1"/>
    <property type="molecule type" value="Genomic_DNA"/>
</dbReference>
<dbReference type="RefSeq" id="WP_015916191.1">
    <property type="nucleotide sequence ID" value="NC_011989.1"/>
</dbReference>
<dbReference type="SMR" id="B9JWZ2"/>
<dbReference type="STRING" id="311402.Avi_2478"/>
<dbReference type="KEGG" id="avi:Avi_2478"/>
<dbReference type="eggNOG" id="COG0544">
    <property type="taxonomic scope" value="Bacteria"/>
</dbReference>
<dbReference type="HOGENOM" id="CLU_033058_2_2_5"/>
<dbReference type="Proteomes" id="UP000001596">
    <property type="component" value="Chromosome 1"/>
</dbReference>
<dbReference type="GO" id="GO:0005737">
    <property type="term" value="C:cytoplasm"/>
    <property type="evidence" value="ECO:0007669"/>
    <property type="project" value="UniProtKB-SubCell"/>
</dbReference>
<dbReference type="GO" id="GO:0003755">
    <property type="term" value="F:peptidyl-prolyl cis-trans isomerase activity"/>
    <property type="evidence" value="ECO:0007669"/>
    <property type="project" value="UniProtKB-UniRule"/>
</dbReference>
<dbReference type="GO" id="GO:0044183">
    <property type="term" value="F:protein folding chaperone"/>
    <property type="evidence" value="ECO:0007669"/>
    <property type="project" value="TreeGrafter"/>
</dbReference>
<dbReference type="GO" id="GO:0043022">
    <property type="term" value="F:ribosome binding"/>
    <property type="evidence" value="ECO:0007669"/>
    <property type="project" value="TreeGrafter"/>
</dbReference>
<dbReference type="GO" id="GO:0051083">
    <property type="term" value="P:'de novo' cotranslational protein folding"/>
    <property type="evidence" value="ECO:0007669"/>
    <property type="project" value="TreeGrafter"/>
</dbReference>
<dbReference type="GO" id="GO:0051301">
    <property type="term" value="P:cell division"/>
    <property type="evidence" value="ECO:0007669"/>
    <property type="project" value="UniProtKB-KW"/>
</dbReference>
<dbReference type="GO" id="GO:0061077">
    <property type="term" value="P:chaperone-mediated protein folding"/>
    <property type="evidence" value="ECO:0007669"/>
    <property type="project" value="TreeGrafter"/>
</dbReference>
<dbReference type="GO" id="GO:0015031">
    <property type="term" value="P:protein transport"/>
    <property type="evidence" value="ECO:0007669"/>
    <property type="project" value="UniProtKB-UniRule"/>
</dbReference>
<dbReference type="GO" id="GO:0043335">
    <property type="term" value="P:protein unfolding"/>
    <property type="evidence" value="ECO:0007669"/>
    <property type="project" value="TreeGrafter"/>
</dbReference>
<dbReference type="FunFam" id="3.10.50.40:FF:000001">
    <property type="entry name" value="Trigger factor"/>
    <property type="match status" value="1"/>
</dbReference>
<dbReference type="Gene3D" id="3.10.50.40">
    <property type="match status" value="1"/>
</dbReference>
<dbReference type="Gene3D" id="3.30.70.1050">
    <property type="entry name" value="Trigger factor ribosome-binding domain"/>
    <property type="match status" value="1"/>
</dbReference>
<dbReference type="Gene3D" id="1.10.3120.10">
    <property type="entry name" value="Trigger factor, C-terminal domain"/>
    <property type="match status" value="1"/>
</dbReference>
<dbReference type="HAMAP" id="MF_00303">
    <property type="entry name" value="Trigger_factor_Tig"/>
    <property type="match status" value="1"/>
</dbReference>
<dbReference type="InterPro" id="IPR046357">
    <property type="entry name" value="PPIase_dom_sf"/>
</dbReference>
<dbReference type="InterPro" id="IPR001179">
    <property type="entry name" value="PPIase_FKBP_dom"/>
</dbReference>
<dbReference type="InterPro" id="IPR005215">
    <property type="entry name" value="Trig_fac"/>
</dbReference>
<dbReference type="InterPro" id="IPR008880">
    <property type="entry name" value="Trigger_fac_C"/>
</dbReference>
<dbReference type="InterPro" id="IPR037041">
    <property type="entry name" value="Trigger_fac_C_sf"/>
</dbReference>
<dbReference type="InterPro" id="IPR008881">
    <property type="entry name" value="Trigger_fac_ribosome-bd_bac"/>
</dbReference>
<dbReference type="InterPro" id="IPR036611">
    <property type="entry name" value="Trigger_fac_ribosome-bd_sf"/>
</dbReference>
<dbReference type="InterPro" id="IPR027304">
    <property type="entry name" value="Trigger_fact/SurA_dom_sf"/>
</dbReference>
<dbReference type="NCBIfam" id="TIGR00115">
    <property type="entry name" value="tig"/>
    <property type="match status" value="1"/>
</dbReference>
<dbReference type="PANTHER" id="PTHR30560">
    <property type="entry name" value="TRIGGER FACTOR CHAPERONE AND PEPTIDYL-PROLYL CIS/TRANS ISOMERASE"/>
    <property type="match status" value="1"/>
</dbReference>
<dbReference type="PANTHER" id="PTHR30560:SF3">
    <property type="entry name" value="TRIGGER FACTOR-LIKE PROTEIN TIG, CHLOROPLASTIC"/>
    <property type="match status" value="1"/>
</dbReference>
<dbReference type="Pfam" id="PF00254">
    <property type="entry name" value="FKBP_C"/>
    <property type="match status" value="1"/>
</dbReference>
<dbReference type="Pfam" id="PF05698">
    <property type="entry name" value="Trigger_C"/>
    <property type="match status" value="1"/>
</dbReference>
<dbReference type="Pfam" id="PF05697">
    <property type="entry name" value="Trigger_N"/>
    <property type="match status" value="1"/>
</dbReference>
<dbReference type="PIRSF" id="PIRSF003095">
    <property type="entry name" value="Trigger_factor"/>
    <property type="match status" value="1"/>
</dbReference>
<dbReference type="SUPFAM" id="SSF54534">
    <property type="entry name" value="FKBP-like"/>
    <property type="match status" value="1"/>
</dbReference>
<dbReference type="SUPFAM" id="SSF109998">
    <property type="entry name" value="Triger factor/SurA peptide-binding domain-like"/>
    <property type="match status" value="1"/>
</dbReference>
<dbReference type="SUPFAM" id="SSF102735">
    <property type="entry name" value="Trigger factor ribosome-binding domain"/>
    <property type="match status" value="1"/>
</dbReference>
<dbReference type="PROSITE" id="PS50059">
    <property type="entry name" value="FKBP_PPIASE"/>
    <property type="match status" value="1"/>
</dbReference>
<proteinExistence type="inferred from homology"/>
<protein>
    <recommendedName>
        <fullName evidence="1">Trigger factor</fullName>
        <shortName evidence="1">TF</shortName>
        <ecNumber evidence="1">5.2.1.8</ecNumber>
    </recommendedName>
    <alternativeName>
        <fullName evidence="1">PPIase</fullName>
    </alternativeName>
</protein>
<sequence>MQVIETLAEGLKRELKVIIPAADMEAQMNERLADVKDKVRINGFRPGKVPAGHLKKMYGKSVMAELVNEIVRDRPSAILSERGEKSATQPEVAMTEDEAEADKILNAQADFEFTLAYEVIPAIELKPVDGIKIVREVVEVSEDEVNEQIMKIAESARTFATKDGVAADGDRVTMDYLGKVDGVPFDGGKDEDAELVIGSNRFIPGFEEQLVGLKAGDEKVINVTFPTEYPAANLAGKDATFDITVKEVAAPAETEINDELATKLGLESVDKLKEIVRGQIESQYGNVTRQKIKRQILDQLDEMYKFEAPSRLVDAEFDNIWRQINTDLQQSGKTFEDEETTEDAAREEYRALAERRVRLGLVLSEIGEKAAIDVTEEEMQRALYAQLQQFPGQEKQIIDFFRNTPGASASLRAPIFEEKVMDKLISEVNVTDKTVTKEELLAEDEDGDDTKPAKKSAKKKAAKAEDASAEGEEAAPKKKAAAKKKAADEGDAE</sequence>